<accession>Q82DQ1</accession>
<sequence>MATTSLDLAKVRNIGIMAHIDAGKTTTTERILFYTGVSYKIGEVHDGAATMDWMEQEQERGITITSAATTCHWPLEDNDYTINIIDTPGHVDFTVEVERSLRVLDGAVTVFDGVAGVEPQSETVWRQADRYGVPRICFVNKLDRTGAEFHRCVDMIKDRLGAVPIIMQLPIGAEMDFKGVVDLVRMKALVWSAEAAKGEMYDVVDIPATHAEAAEEYRGKLVETVAENDDEIMELFLEGQEPTEEQLYAAIRRITIASGKGDGVTVTPVFCGTAFKNKGVQPLLDAVVRYLPTPLDVEAIEGHDVKDPEVVVKRKPSEDEPLSALAFKIMSDPHLGKLTFVRVYSGRLESGTAVLNSVKGKKERIGKIYRMHANKREEIEAVGAGDIVAVMGLKQTTTGETLSDDKNPVILESMDFPAPVIQVAIEPKSKGDQEKLGVAIQRLAEEDPSFQVHSDEETGQTIIGGMGELHLEVLVDRMRREFKVEANVGKPQVAYRETIRKTVERVDYTHKKQTGGTGQFAKVQIAIEPITETDGPAYEFVNKVTGGRIPREYIPSVDAGAQEAMQFGILAGYEMTGVRVTLLDGAYHEVDSSELAFKIAGSQAFKEAARKASPVLLEPMMAVEVTTPEESMGDVIGDLNSRRGQIQAMEERSGARVVKGLVPLSEMFGYVGDLRSKTSGRASYSMQFDSYAEVPRNVAEEIIAKAKGE</sequence>
<keyword id="KW-0963">Cytoplasm</keyword>
<keyword id="KW-0251">Elongation factor</keyword>
<keyword id="KW-0342">GTP-binding</keyword>
<keyword id="KW-0547">Nucleotide-binding</keyword>
<keyword id="KW-0648">Protein biosynthesis</keyword>
<keyword id="KW-1185">Reference proteome</keyword>
<gene>
    <name evidence="1" type="primary">fusA</name>
    <name type="ordered locus">SAV_4919</name>
</gene>
<dbReference type="EMBL" id="BA000030">
    <property type="protein sequence ID" value="BAC72631.1"/>
    <property type="molecule type" value="Genomic_DNA"/>
</dbReference>
<dbReference type="RefSeq" id="WP_010986336.1">
    <property type="nucleotide sequence ID" value="NZ_JZJK01000077.1"/>
</dbReference>
<dbReference type="SMR" id="Q82DQ1"/>
<dbReference type="GeneID" id="41542003"/>
<dbReference type="KEGG" id="sma:SAVERM_4919"/>
<dbReference type="eggNOG" id="COG0480">
    <property type="taxonomic scope" value="Bacteria"/>
</dbReference>
<dbReference type="HOGENOM" id="CLU_002794_4_1_11"/>
<dbReference type="OrthoDB" id="9801472at2"/>
<dbReference type="Proteomes" id="UP000000428">
    <property type="component" value="Chromosome"/>
</dbReference>
<dbReference type="GO" id="GO:0005737">
    <property type="term" value="C:cytoplasm"/>
    <property type="evidence" value="ECO:0007669"/>
    <property type="project" value="UniProtKB-SubCell"/>
</dbReference>
<dbReference type="GO" id="GO:0005525">
    <property type="term" value="F:GTP binding"/>
    <property type="evidence" value="ECO:0007669"/>
    <property type="project" value="UniProtKB-UniRule"/>
</dbReference>
<dbReference type="GO" id="GO:0003924">
    <property type="term" value="F:GTPase activity"/>
    <property type="evidence" value="ECO:0007669"/>
    <property type="project" value="InterPro"/>
</dbReference>
<dbReference type="GO" id="GO:0003746">
    <property type="term" value="F:translation elongation factor activity"/>
    <property type="evidence" value="ECO:0007669"/>
    <property type="project" value="UniProtKB-UniRule"/>
</dbReference>
<dbReference type="GO" id="GO:0032790">
    <property type="term" value="P:ribosome disassembly"/>
    <property type="evidence" value="ECO:0007669"/>
    <property type="project" value="TreeGrafter"/>
</dbReference>
<dbReference type="CDD" id="cd01886">
    <property type="entry name" value="EF-G"/>
    <property type="match status" value="1"/>
</dbReference>
<dbReference type="CDD" id="cd16262">
    <property type="entry name" value="EFG_III"/>
    <property type="match status" value="1"/>
</dbReference>
<dbReference type="CDD" id="cd01434">
    <property type="entry name" value="EFG_mtEFG1_IV"/>
    <property type="match status" value="1"/>
</dbReference>
<dbReference type="CDD" id="cd03713">
    <property type="entry name" value="EFG_mtEFG_C"/>
    <property type="match status" value="1"/>
</dbReference>
<dbReference type="CDD" id="cd04088">
    <property type="entry name" value="EFG_mtEFG_II"/>
    <property type="match status" value="1"/>
</dbReference>
<dbReference type="FunFam" id="2.40.30.10:FF:000006">
    <property type="entry name" value="Elongation factor G"/>
    <property type="match status" value="1"/>
</dbReference>
<dbReference type="FunFam" id="3.30.230.10:FF:000003">
    <property type="entry name" value="Elongation factor G"/>
    <property type="match status" value="1"/>
</dbReference>
<dbReference type="FunFam" id="3.30.70.240:FF:000001">
    <property type="entry name" value="Elongation factor G"/>
    <property type="match status" value="1"/>
</dbReference>
<dbReference type="FunFam" id="3.30.70.870:FF:000001">
    <property type="entry name" value="Elongation factor G"/>
    <property type="match status" value="1"/>
</dbReference>
<dbReference type="FunFam" id="3.40.50.300:FF:000029">
    <property type="entry name" value="Elongation factor G"/>
    <property type="match status" value="1"/>
</dbReference>
<dbReference type="Gene3D" id="3.30.230.10">
    <property type="match status" value="1"/>
</dbReference>
<dbReference type="Gene3D" id="3.30.70.240">
    <property type="match status" value="1"/>
</dbReference>
<dbReference type="Gene3D" id="3.30.70.870">
    <property type="entry name" value="Elongation Factor G (Translational Gtpase), domain 3"/>
    <property type="match status" value="1"/>
</dbReference>
<dbReference type="Gene3D" id="3.40.50.300">
    <property type="entry name" value="P-loop containing nucleotide triphosphate hydrolases"/>
    <property type="match status" value="1"/>
</dbReference>
<dbReference type="Gene3D" id="2.40.30.10">
    <property type="entry name" value="Translation factors"/>
    <property type="match status" value="1"/>
</dbReference>
<dbReference type="HAMAP" id="MF_00054_B">
    <property type="entry name" value="EF_G_EF_2_B"/>
    <property type="match status" value="1"/>
</dbReference>
<dbReference type="InterPro" id="IPR053905">
    <property type="entry name" value="EF-G-like_DII"/>
</dbReference>
<dbReference type="InterPro" id="IPR041095">
    <property type="entry name" value="EFG_II"/>
</dbReference>
<dbReference type="InterPro" id="IPR009022">
    <property type="entry name" value="EFG_III"/>
</dbReference>
<dbReference type="InterPro" id="IPR035647">
    <property type="entry name" value="EFG_III/V"/>
</dbReference>
<dbReference type="InterPro" id="IPR047872">
    <property type="entry name" value="EFG_IV"/>
</dbReference>
<dbReference type="InterPro" id="IPR035649">
    <property type="entry name" value="EFG_V"/>
</dbReference>
<dbReference type="InterPro" id="IPR000640">
    <property type="entry name" value="EFG_V-like"/>
</dbReference>
<dbReference type="InterPro" id="IPR031157">
    <property type="entry name" value="G_TR_CS"/>
</dbReference>
<dbReference type="InterPro" id="IPR027417">
    <property type="entry name" value="P-loop_NTPase"/>
</dbReference>
<dbReference type="InterPro" id="IPR020568">
    <property type="entry name" value="Ribosomal_Su5_D2-typ_SF"/>
</dbReference>
<dbReference type="InterPro" id="IPR014721">
    <property type="entry name" value="Ribsml_uS5_D2-typ_fold_subgr"/>
</dbReference>
<dbReference type="InterPro" id="IPR005225">
    <property type="entry name" value="Small_GTP-bd"/>
</dbReference>
<dbReference type="InterPro" id="IPR000795">
    <property type="entry name" value="T_Tr_GTP-bd_dom"/>
</dbReference>
<dbReference type="InterPro" id="IPR009000">
    <property type="entry name" value="Transl_B-barrel_sf"/>
</dbReference>
<dbReference type="InterPro" id="IPR004540">
    <property type="entry name" value="Transl_elong_EFG/EF2"/>
</dbReference>
<dbReference type="InterPro" id="IPR005517">
    <property type="entry name" value="Transl_elong_EFG/EF2_IV"/>
</dbReference>
<dbReference type="NCBIfam" id="TIGR00484">
    <property type="entry name" value="EF-G"/>
    <property type="match status" value="1"/>
</dbReference>
<dbReference type="NCBIfam" id="NF009379">
    <property type="entry name" value="PRK12740.1-3"/>
    <property type="match status" value="1"/>
</dbReference>
<dbReference type="NCBIfam" id="NF009381">
    <property type="entry name" value="PRK12740.1-5"/>
    <property type="match status" value="1"/>
</dbReference>
<dbReference type="NCBIfam" id="TIGR00231">
    <property type="entry name" value="small_GTP"/>
    <property type="match status" value="1"/>
</dbReference>
<dbReference type="PANTHER" id="PTHR43261:SF1">
    <property type="entry name" value="RIBOSOME-RELEASING FACTOR 2, MITOCHONDRIAL"/>
    <property type="match status" value="1"/>
</dbReference>
<dbReference type="PANTHER" id="PTHR43261">
    <property type="entry name" value="TRANSLATION ELONGATION FACTOR G-RELATED"/>
    <property type="match status" value="1"/>
</dbReference>
<dbReference type="Pfam" id="PF22042">
    <property type="entry name" value="EF-G_D2"/>
    <property type="match status" value="1"/>
</dbReference>
<dbReference type="Pfam" id="PF00679">
    <property type="entry name" value="EFG_C"/>
    <property type="match status" value="1"/>
</dbReference>
<dbReference type="Pfam" id="PF14492">
    <property type="entry name" value="EFG_III"/>
    <property type="match status" value="1"/>
</dbReference>
<dbReference type="Pfam" id="PF03764">
    <property type="entry name" value="EFG_IV"/>
    <property type="match status" value="1"/>
</dbReference>
<dbReference type="Pfam" id="PF00009">
    <property type="entry name" value="GTP_EFTU"/>
    <property type="match status" value="1"/>
</dbReference>
<dbReference type="PRINTS" id="PR00315">
    <property type="entry name" value="ELONGATNFCT"/>
</dbReference>
<dbReference type="SMART" id="SM00838">
    <property type="entry name" value="EFG_C"/>
    <property type="match status" value="1"/>
</dbReference>
<dbReference type="SMART" id="SM00889">
    <property type="entry name" value="EFG_IV"/>
    <property type="match status" value="1"/>
</dbReference>
<dbReference type="SUPFAM" id="SSF54980">
    <property type="entry name" value="EF-G C-terminal domain-like"/>
    <property type="match status" value="2"/>
</dbReference>
<dbReference type="SUPFAM" id="SSF52540">
    <property type="entry name" value="P-loop containing nucleoside triphosphate hydrolases"/>
    <property type="match status" value="1"/>
</dbReference>
<dbReference type="SUPFAM" id="SSF54211">
    <property type="entry name" value="Ribosomal protein S5 domain 2-like"/>
    <property type="match status" value="1"/>
</dbReference>
<dbReference type="SUPFAM" id="SSF50447">
    <property type="entry name" value="Translation proteins"/>
    <property type="match status" value="1"/>
</dbReference>
<dbReference type="PROSITE" id="PS00301">
    <property type="entry name" value="G_TR_1"/>
    <property type="match status" value="1"/>
</dbReference>
<dbReference type="PROSITE" id="PS51722">
    <property type="entry name" value="G_TR_2"/>
    <property type="match status" value="1"/>
</dbReference>
<proteinExistence type="inferred from homology"/>
<feature type="chain" id="PRO_0000091226" description="Elongation factor G">
    <location>
        <begin position="1"/>
        <end position="709"/>
    </location>
</feature>
<feature type="domain" description="tr-type G">
    <location>
        <begin position="9"/>
        <end position="295"/>
    </location>
</feature>
<feature type="binding site" evidence="1">
    <location>
        <begin position="18"/>
        <end position="25"/>
    </location>
    <ligand>
        <name>GTP</name>
        <dbReference type="ChEBI" id="CHEBI:37565"/>
    </ligand>
</feature>
<feature type="binding site" evidence="1">
    <location>
        <begin position="86"/>
        <end position="90"/>
    </location>
    <ligand>
        <name>GTP</name>
        <dbReference type="ChEBI" id="CHEBI:37565"/>
    </ligand>
</feature>
<feature type="binding site" evidence="1">
    <location>
        <begin position="140"/>
        <end position="143"/>
    </location>
    <ligand>
        <name>GTP</name>
        <dbReference type="ChEBI" id="CHEBI:37565"/>
    </ligand>
</feature>
<organism>
    <name type="scientific">Streptomyces avermitilis (strain ATCC 31267 / DSM 46492 / JCM 5070 / NBRC 14893 / NCIMB 12804 / NRRL 8165 / MA-4680)</name>
    <dbReference type="NCBI Taxonomy" id="227882"/>
    <lineage>
        <taxon>Bacteria</taxon>
        <taxon>Bacillati</taxon>
        <taxon>Actinomycetota</taxon>
        <taxon>Actinomycetes</taxon>
        <taxon>Kitasatosporales</taxon>
        <taxon>Streptomycetaceae</taxon>
        <taxon>Streptomyces</taxon>
    </lineage>
</organism>
<name>EFG_STRAW</name>
<protein>
    <recommendedName>
        <fullName evidence="1">Elongation factor G</fullName>
        <shortName evidence="1">EF-G</shortName>
    </recommendedName>
</protein>
<reference key="1">
    <citation type="journal article" date="2001" name="Proc. Natl. Acad. Sci. U.S.A.">
        <title>Genome sequence of an industrial microorganism Streptomyces avermitilis: deducing the ability of producing secondary metabolites.</title>
        <authorList>
            <person name="Omura S."/>
            <person name="Ikeda H."/>
            <person name="Ishikawa J."/>
            <person name="Hanamoto A."/>
            <person name="Takahashi C."/>
            <person name="Shinose M."/>
            <person name="Takahashi Y."/>
            <person name="Horikawa H."/>
            <person name="Nakazawa H."/>
            <person name="Osonoe T."/>
            <person name="Kikuchi H."/>
            <person name="Shiba T."/>
            <person name="Sakaki Y."/>
            <person name="Hattori M."/>
        </authorList>
    </citation>
    <scope>NUCLEOTIDE SEQUENCE [LARGE SCALE GENOMIC DNA]</scope>
    <source>
        <strain>ATCC 31267 / DSM 46492 / JCM 5070 / NBRC 14893 / NCIMB 12804 / NRRL 8165 / MA-4680</strain>
    </source>
</reference>
<reference key="2">
    <citation type="journal article" date="2003" name="Nat. Biotechnol.">
        <title>Complete genome sequence and comparative analysis of the industrial microorganism Streptomyces avermitilis.</title>
        <authorList>
            <person name="Ikeda H."/>
            <person name="Ishikawa J."/>
            <person name="Hanamoto A."/>
            <person name="Shinose M."/>
            <person name="Kikuchi H."/>
            <person name="Shiba T."/>
            <person name="Sakaki Y."/>
            <person name="Hattori M."/>
            <person name="Omura S."/>
        </authorList>
    </citation>
    <scope>NUCLEOTIDE SEQUENCE [LARGE SCALE GENOMIC DNA]</scope>
    <source>
        <strain>ATCC 31267 / DSM 46492 / JCM 5070 / NBRC 14893 / NCIMB 12804 / NRRL 8165 / MA-4680</strain>
    </source>
</reference>
<evidence type="ECO:0000255" key="1">
    <source>
        <dbReference type="HAMAP-Rule" id="MF_00054"/>
    </source>
</evidence>
<comment type="function">
    <text evidence="1">Catalyzes the GTP-dependent ribosomal translocation step during translation elongation. During this step, the ribosome changes from the pre-translocational (PRE) to the post-translocational (POST) state as the newly formed A-site-bound peptidyl-tRNA and P-site-bound deacylated tRNA move to the P and E sites, respectively. Catalyzes the coordinated movement of the two tRNA molecules, the mRNA and conformational changes in the ribosome.</text>
</comment>
<comment type="subcellular location">
    <subcellularLocation>
        <location evidence="1">Cytoplasm</location>
    </subcellularLocation>
</comment>
<comment type="similarity">
    <text evidence="1">Belongs to the TRAFAC class translation factor GTPase superfamily. Classic translation factor GTPase family. EF-G/EF-2 subfamily.</text>
</comment>